<name>GLGA_THEP1</name>
<evidence type="ECO:0000255" key="1">
    <source>
        <dbReference type="HAMAP-Rule" id="MF_00484"/>
    </source>
</evidence>
<proteinExistence type="inferred from homology"/>
<gene>
    <name evidence="1" type="primary">glgA</name>
    <name type="ordered locus">Tpet_0032</name>
</gene>
<keyword id="KW-0320">Glycogen biosynthesis</keyword>
<keyword id="KW-0328">Glycosyltransferase</keyword>
<keyword id="KW-0808">Transferase</keyword>
<protein>
    <recommendedName>
        <fullName evidence="1">Glycogen synthase</fullName>
        <ecNumber evidence="1">2.4.1.21</ecNumber>
    </recommendedName>
    <alternativeName>
        <fullName evidence="1">Starch [bacterial glycogen] synthase</fullName>
    </alternativeName>
</protein>
<comment type="function">
    <text evidence="1">Synthesizes alpha-1,4-glucan chains using ADP-glucose.</text>
</comment>
<comment type="catalytic activity">
    <reaction evidence="1">
        <text>[(1-&gt;4)-alpha-D-glucosyl](n) + ADP-alpha-D-glucose = [(1-&gt;4)-alpha-D-glucosyl](n+1) + ADP + H(+)</text>
        <dbReference type="Rhea" id="RHEA:18189"/>
        <dbReference type="Rhea" id="RHEA-COMP:9584"/>
        <dbReference type="Rhea" id="RHEA-COMP:9587"/>
        <dbReference type="ChEBI" id="CHEBI:15378"/>
        <dbReference type="ChEBI" id="CHEBI:15444"/>
        <dbReference type="ChEBI" id="CHEBI:57498"/>
        <dbReference type="ChEBI" id="CHEBI:456216"/>
        <dbReference type="EC" id="2.4.1.21"/>
    </reaction>
</comment>
<comment type="pathway">
    <text evidence="1">Glycan biosynthesis; glycogen biosynthesis.</text>
</comment>
<comment type="similarity">
    <text evidence="1">Belongs to the glycosyltransferase 1 family. Bacterial/plant glycogen synthase subfamily.</text>
</comment>
<accession>A5IIN8</accession>
<sequence>MKVVFVSYEVFPFAKVGGLADVAGTLPKYLKKHGVDVTIVMPKHRIVEKNAEKFGYEIKKVAEGLSVSHVKTDQKFDIYESVLPGSDVKTYFVANDYYFSAEDVYAGPDLGEQAIFFCAATLDLVKHLDLKPDIVHVNDWQTALIPVYLKTVYRDDPYFSRTATVLTIHNLGYQGVFDPKYLSFAGLPDYVFTIDGLEFYRQLNFLKGGIVFSDVINTVSPTYAEEIQTEEYGEKLEGVLRMRSKDLYGILNGIDYELYNPATDRYIYVNYDVNRLELKWENKVKLQEELGLPVNKETAVAGLISRLVPQKGLDLLVDVMDYLMLFDLQIVVLGTGDEQYENAFRKFQERYPDKVSANIKFDVELAQKIYAGADIFLMPSRYEPCGLGQMFSMRYGTIPVVRYTGGLADTVKEYDPQSMEGTGFGFKKYDSAHLLKAVSKALHFYYREKDHWRRIMTNAMNTDLSWDRSAKEYVDLYKKALAKVGR</sequence>
<dbReference type="EC" id="2.4.1.21" evidence="1"/>
<dbReference type="EMBL" id="CP000702">
    <property type="protein sequence ID" value="ABQ46061.1"/>
    <property type="molecule type" value="Genomic_DNA"/>
</dbReference>
<dbReference type="RefSeq" id="WP_011942738.1">
    <property type="nucleotide sequence ID" value="NC_009486.1"/>
</dbReference>
<dbReference type="SMR" id="A5IIN8"/>
<dbReference type="STRING" id="390874.Tpet_0032"/>
<dbReference type="CAZy" id="GT5">
    <property type="family name" value="Glycosyltransferase Family 5"/>
</dbReference>
<dbReference type="KEGG" id="tpt:Tpet_0032"/>
<dbReference type="eggNOG" id="COG0297">
    <property type="taxonomic scope" value="Bacteria"/>
</dbReference>
<dbReference type="HOGENOM" id="CLU_009583_18_2_0"/>
<dbReference type="UniPathway" id="UPA00164"/>
<dbReference type="Proteomes" id="UP000006558">
    <property type="component" value="Chromosome"/>
</dbReference>
<dbReference type="GO" id="GO:0009011">
    <property type="term" value="F:alpha-1,4-glucan glucosyltransferase (ADP-glucose donor) activity"/>
    <property type="evidence" value="ECO:0007669"/>
    <property type="project" value="UniProtKB-UniRule"/>
</dbReference>
<dbReference type="GO" id="GO:0004373">
    <property type="term" value="F:alpha-1,4-glucan glucosyltransferase (UDP-glucose donor) activity"/>
    <property type="evidence" value="ECO:0007669"/>
    <property type="project" value="InterPro"/>
</dbReference>
<dbReference type="GO" id="GO:0005978">
    <property type="term" value="P:glycogen biosynthetic process"/>
    <property type="evidence" value="ECO:0007669"/>
    <property type="project" value="UniProtKB-UniRule"/>
</dbReference>
<dbReference type="CDD" id="cd03791">
    <property type="entry name" value="GT5_Glycogen_synthase_DULL1-like"/>
    <property type="match status" value="1"/>
</dbReference>
<dbReference type="Gene3D" id="3.40.50.2000">
    <property type="entry name" value="Glycogen Phosphorylase B"/>
    <property type="match status" value="2"/>
</dbReference>
<dbReference type="HAMAP" id="MF_00484">
    <property type="entry name" value="Glycogen_synth"/>
    <property type="match status" value="1"/>
</dbReference>
<dbReference type="InterPro" id="IPR001296">
    <property type="entry name" value="Glyco_trans_1"/>
</dbReference>
<dbReference type="InterPro" id="IPR011835">
    <property type="entry name" value="GS/SS"/>
</dbReference>
<dbReference type="InterPro" id="IPR013534">
    <property type="entry name" value="Starch_synth_cat_dom"/>
</dbReference>
<dbReference type="NCBIfam" id="TIGR02095">
    <property type="entry name" value="glgA"/>
    <property type="match status" value="1"/>
</dbReference>
<dbReference type="PANTHER" id="PTHR45825:SF11">
    <property type="entry name" value="ALPHA AMYLASE DOMAIN-CONTAINING PROTEIN"/>
    <property type="match status" value="1"/>
</dbReference>
<dbReference type="PANTHER" id="PTHR45825">
    <property type="entry name" value="GRANULE-BOUND STARCH SYNTHASE 1, CHLOROPLASTIC/AMYLOPLASTIC"/>
    <property type="match status" value="1"/>
</dbReference>
<dbReference type="Pfam" id="PF08323">
    <property type="entry name" value="Glyco_transf_5"/>
    <property type="match status" value="1"/>
</dbReference>
<dbReference type="Pfam" id="PF00534">
    <property type="entry name" value="Glycos_transf_1"/>
    <property type="match status" value="1"/>
</dbReference>
<dbReference type="SUPFAM" id="SSF53756">
    <property type="entry name" value="UDP-Glycosyltransferase/glycogen phosphorylase"/>
    <property type="match status" value="1"/>
</dbReference>
<feature type="chain" id="PRO_1000014390" description="Glycogen synthase">
    <location>
        <begin position="1"/>
        <end position="486"/>
    </location>
</feature>
<feature type="binding site" evidence="1">
    <location>
        <position position="15"/>
    </location>
    <ligand>
        <name>ADP-alpha-D-glucose</name>
        <dbReference type="ChEBI" id="CHEBI:57498"/>
    </ligand>
</feature>
<reference key="1">
    <citation type="submission" date="2007-05" db="EMBL/GenBank/DDBJ databases">
        <title>Complete sequence of Thermotoga petrophila RKU-1.</title>
        <authorList>
            <consortium name="US DOE Joint Genome Institute"/>
            <person name="Copeland A."/>
            <person name="Lucas S."/>
            <person name="Lapidus A."/>
            <person name="Barry K."/>
            <person name="Glavina del Rio T."/>
            <person name="Dalin E."/>
            <person name="Tice H."/>
            <person name="Pitluck S."/>
            <person name="Sims D."/>
            <person name="Brettin T."/>
            <person name="Bruce D."/>
            <person name="Detter J.C."/>
            <person name="Han C."/>
            <person name="Tapia R."/>
            <person name="Schmutz J."/>
            <person name="Larimer F."/>
            <person name="Land M."/>
            <person name="Hauser L."/>
            <person name="Kyrpides N."/>
            <person name="Mikhailova N."/>
            <person name="Nelson K."/>
            <person name="Gogarten J.P."/>
            <person name="Noll K."/>
            <person name="Richardson P."/>
        </authorList>
    </citation>
    <scope>NUCLEOTIDE SEQUENCE [LARGE SCALE GENOMIC DNA]</scope>
    <source>
        <strain>ATCC BAA-488 / DSM 13995 / JCM 10881 / RKU-1</strain>
    </source>
</reference>
<organism>
    <name type="scientific">Thermotoga petrophila (strain ATCC BAA-488 / DSM 13995 / JCM 10881 / RKU-1)</name>
    <dbReference type="NCBI Taxonomy" id="390874"/>
    <lineage>
        <taxon>Bacteria</taxon>
        <taxon>Thermotogati</taxon>
        <taxon>Thermotogota</taxon>
        <taxon>Thermotogae</taxon>
        <taxon>Thermotogales</taxon>
        <taxon>Thermotogaceae</taxon>
        <taxon>Thermotoga</taxon>
    </lineage>
</organism>